<proteinExistence type="inferred from homology"/>
<evidence type="ECO:0000250" key="1"/>
<evidence type="ECO:0000255" key="2">
    <source>
        <dbReference type="HAMAP-Rule" id="MF_00100"/>
    </source>
</evidence>
<evidence type="ECO:0000256" key="3">
    <source>
        <dbReference type="SAM" id="MobiDB-lite"/>
    </source>
</evidence>
<sequence>MSETKNPGDHTLSVSPTKTLSLKRPVEAGIVRQSFSHGRSKAVVVEKVKRRALGEPHVLRESAPALDVVAPAPQAAPPAPTQQPQPRVASRPQPQQRSSSGVILRSLTEEEREARSRALSGAHEREVEERKRAEIEAKARDEREAREREERAAAEARKREEETRRLQEAESKRRSESEAKRRLAGGEPAPAGANAAPRKAPALSAAPGSAAPSGQPGPAGAVGARPAEEEDAAKRIIRRPGMPTKVIVARPVKGAEQKSRGRLTVASATGDEEERTRSIAAFRRRTQRLKGHVSETKEKLSREVVLPETITIQELANRMSERAVDVIKLMMKQGQMAKITDVIDADTAQLIAEELGHTVKRVAESDVEEGLFDSPDVEEHLISRPPVVTIMGHVDHGKTSLLDALRHANVVSGEAGGITQHIGAYQIVASNGLPITFIDTPGHAAFTAMRARGAKVTDIVVLVVAADDGVMPQTAEAISHAKAAGVPIIVAINKIDKPDAKPERVRQELLQYEVQVESLGGDTLEVEVSATKKINLDKLADLIALQAELLDLKASPDRPAEGTVIEARLDKGRGPVATVLVQRGTLKVGDLIVGGSQWGKVRALIDDKGVNRQEAGPSMPVEVLGFSGSPEAGDRVGVVENEARAREIAAYRDRQKREQAAARGNLARGSLADMMSQLKTAARKEFPLVIKADVQGSLEAIVATLEKLNTDEVAARIIHAGVGGITESDVTLAEASGAVLIGFNVRAHKEGRQLAEQQGLEIRYYNIIYNLVDDVKAAMSGLLAPTLREDMLGNAEILEVFHISKVGKVAGCRVTDGRVERGANVRLIRDNVVVHEGKLSTLKRFKDEVKEVVAGQECGMAFEHYQDMRVGDVIECYRVEEIQRTL</sequence>
<gene>
    <name evidence="2" type="primary">infB</name>
    <name type="ordered locus">Msil_2295</name>
</gene>
<keyword id="KW-0963">Cytoplasm</keyword>
<keyword id="KW-0342">GTP-binding</keyword>
<keyword id="KW-0396">Initiation factor</keyword>
<keyword id="KW-0547">Nucleotide-binding</keyword>
<keyword id="KW-0648">Protein biosynthesis</keyword>
<keyword id="KW-1185">Reference proteome</keyword>
<accession>B8EIA7</accession>
<reference key="1">
    <citation type="journal article" date="2010" name="J. Bacteriol.">
        <title>Complete genome sequence of the aerobic facultative methanotroph Methylocella silvestris BL2.</title>
        <authorList>
            <person name="Chen Y."/>
            <person name="Crombie A."/>
            <person name="Rahman M.T."/>
            <person name="Dedysh S.N."/>
            <person name="Liesack W."/>
            <person name="Stott M.B."/>
            <person name="Alam M."/>
            <person name="Theisen A.R."/>
            <person name="Murrell J.C."/>
            <person name="Dunfield P.F."/>
        </authorList>
    </citation>
    <scope>NUCLEOTIDE SEQUENCE [LARGE SCALE GENOMIC DNA]</scope>
    <source>
        <strain>DSM 15510 / CIP 108128 / LMG 27833 / NCIMB 13906 / BL2</strain>
    </source>
</reference>
<name>IF2_METSB</name>
<protein>
    <recommendedName>
        <fullName evidence="2">Translation initiation factor IF-2</fullName>
    </recommendedName>
</protein>
<dbReference type="EMBL" id="CP001280">
    <property type="protein sequence ID" value="ACK51226.1"/>
    <property type="molecule type" value="Genomic_DNA"/>
</dbReference>
<dbReference type="RefSeq" id="WP_012591295.1">
    <property type="nucleotide sequence ID" value="NC_011666.1"/>
</dbReference>
<dbReference type="SMR" id="B8EIA7"/>
<dbReference type="STRING" id="395965.Msil_2295"/>
<dbReference type="KEGG" id="msl:Msil_2295"/>
<dbReference type="eggNOG" id="COG0532">
    <property type="taxonomic scope" value="Bacteria"/>
</dbReference>
<dbReference type="HOGENOM" id="CLU_006301_10_0_5"/>
<dbReference type="OrthoDB" id="9811804at2"/>
<dbReference type="Proteomes" id="UP000002257">
    <property type="component" value="Chromosome"/>
</dbReference>
<dbReference type="GO" id="GO:0005829">
    <property type="term" value="C:cytosol"/>
    <property type="evidence" value="ECO:0007669"/>
    <property type="project" value="TreeGrafter"/>
</dbReference>
<dbReference type="GO" id="GO:0005525">
    <property type="term" value="F:GTP binding"/>
    <property type="evidence" value="ECO:0007669"/>
    <property type="project" value="UniProtKB-KW"/>
</dbReference>
<dbReference type="GO" id="GO:0003924">
    <property type="term" value="F:GTPase activity"/>
    <property type="evidence" value="ECO:0007669"/>
    <property type="project" value="UniProtKB-UniRule"/>
</dbReference>
<dbReference type="GO" id="GO:0097216">
    <property type="term" value="F:guanosine tetraphosphate binding"/>
    <property type="evidence" value="ECO:0007669"/>
    <property type="project" value="UniProtKB-ARBA"/>
</dbReference>
<dbReference type="GO" id="GO:0003743">
    <property type="term" value="F:translation initiation factor activity"/>
    <property type="evidence" value="ECO:0007669"/>
    <property type="project" value="UniProtKB-UniRule"/>
</dbReference>
<dbReference type="CDD" id="cd01887">
    <property type="entry name" value="IF2_eIF5B"/>
    <property type="match status" value="1"/>
</dbReference>
<dbReference type="CDD" id="cd03702">
    <property type="entry name" value="IF2_mtIF2_II"/>
    <property type="match status" value="1"/>
</dbReference>
<dbReference type="CDD" id="cd03692">
    <property type="entry name" value="mtIF2_IVc"/>
    <property type="match status" value="1"/>
</dbReference>
<dbReference type="FunFam" id="2.40.30.10:FF:000007">
    <property type="entry name" value="Translation initiation factor IF-2"/>
    <property type="match status" value="1"/>
</dbReference>
<dbReference type="FunFam" id="2.40.30.10:FF:000008">
    <property type="entry name" value="Translation initiation factor IF-2"/>
    <property type="match status" value="1"/>
</dbReference>
<dbReference type="FunFam" id="3.40.50.10050:FF:000001">
    <property type="entry name" value="Translation initiation factor IF-2"/>
    <property type="match status" value="1"/>
</dbReference>
<dbReference type="FunFam" id="3.40.50.300:FF:000019">
    <property type="entry name" value="Translation initiation factor IF-2"/>
    <property type="match status" value="1"/>
</dbReference>
<dbReference type="Gene3D" id="3.40.50.300">
    <property type="entry name" value="P-loop containing nucleotide triphosphate hydrolases"/>
    <property type="match status" value="1"/>
</dbReference>
<dbReference type="Gene3D" id="2.40.30.10">
    <property type="entry name" value="Translation factors"/>
    <property type="match status" value="2"/>
</dbReference>
<dbReference type="Gene3D" id="3.40.50.10050">
    <property type="entry name" value="Translation initiation factor IF- 2, domain 3"/>
    <property type="match status" value="1"/>
</dbReference>
<dbReference type="HAMAP" id="MF_00100_B">
    <property type="entry name" value="IF_2_B"/>
    <property type="match status" value="1"/>
</dbReference>
<dbReference type="InterPro" id="IPR053905">
    <property type="entry name" value="EF-G-like_DII"/>
</dbReference>
<dbReference type="InterPro" id="IPR004161">
    <property type="entry name" value="EFTu-like_2"/>
</dbReference>
<dbReference type="InterPro" id="IPR013575">
    <property type="entry name" value="IF2_assoc_dom_bac"/>
</dbReference>
<dbReference type="InterPro" id="IPR044145">
    <property type="entry name" value="IF2_II"/>
</dbReference>
<dbReference type="InterPro" id="IPR006847">
    <property type="entry name" value="IF2_N"/>
</dbReference>
<dbReference type="InterPro" id="IPR027417">
    <property type="entry name" value="P-loop_NTPase"/>
</dbReference>
<dbReference type="InterPro" id="IPR005225">
    <property type="entry name" value="Small_GTP-bd"/>
</dbReference>
<dbReference type="InterPro" id="IPR000795">
    <property type="entry name" value="T_Tr_GTP-bd_dom"/>
</dbReference>
<dbReference type="InterPro" id="IPR000178">
    <property type="entry name" value="TF_IF2_bacterial-like"/>
</dbReference>
<dbReference type="InterPro" id="IPR015760">
    <property type="entry name" value="TIF_IF2"/>
</dbReference>
<dbReference type="InterPro" id="IPR023115">
    <property type="entry name" value="TIF_IF2_dom3"/>
</dbReference>
<dbReference type="InterPro" id="IPR036925">
    <property type="entry name" value="TIF_IF2_dom3_sf"/>
</dbReference>
<dbReference type="InterPro" id="IPR009000">
    <property type="entry name" value="Transl_B-barrel_sf"/>
</dbReference>
<dbReference type="NCBIfam" id="TIGR00487">
    <property type="entry name" value="IF-2"/>
    <property type="match status" value="1"/>
</dbReference>
<dbReference type="NCBIfam" id="TIGR00231">
    <property type="entry name" value="small_GTP"/>
    <property type="match status" value="1"/>
</dbReference>
<dbReference type="PANTHER" id="PTHR43381:SF5">
    <property type="entry name" value="TR-TYPE G DOMAIN-CONTAINING PROTEIN"/>
    <property type="match status" value="1"/>
</dbReference>
<dbReference type="PANTHER" id="PTHR43381">
    <property type="entry name" value="TRANSLATION INITIATION FACTOR IF-2-RELATED"/>
    <property type="match status" value="1"/>
</dbReference>
<dbReference type="Pfam" id="PF22042">
    <property type="entry name" value="EF-G_D2"/>
    <property type="match status" value="1"/>
</dbReference>
<dbReference type="Pfam" id="PF00009">
    <property type="entry name" value="GTP_EFTU"/>
    <property type="match status" value="1"/>
</dbReference>
<dbReference type="Pfam" id="PF03144">
    <property type="entry name" value="GTP_EFTU_D2"/>
    <property type="match status" value="1"/>
</dbReference>
<dbReference type="Pfam" id="PF11987">
    <property type="entry name" value="IF-2"/>
    <property type="match status" value="1"/>
</dbReference>
<dbReference type="Pfam" id="PF08364">
    <property type="entry name" value="IF2_assoc"/>
    <property type="match status" value="1"/>
</dbReference>
<dbReference type="Pfam" id="PF04760">
    <property type="entry name" value="IF2_N"/>
    <property type="match status" value="1"/>
</dbReference>
<dbReference type="SUPFAM" id="SSF52156">
    <property type="entry name" value="Initiation factor IF2/eIF5b, domain 3"/>
    <property type="match status" value="1"/>
</dbReference>
<dbReference type="SUPFAM" id="SSF52540">
    <property type="entry name" value="P-loop containing nucleoside triphosphate hydrolases"/>
    <property type="match status" value="1"/>
</dbReference>
<dbReference type="SUPFAM" id="SSF50447">
    <property type="entry name" value="Translation proteins"/>
    <property type="match status" value="2"/>
</dbReference>
<dbReference type="PROSITE" id="PS51722">
    <property type="entry name" value="G_TR_2"/>
    <property type="match status" value="1"/>
</dbReference>
<dbReference type="PROSITE" id="PS01176">
    <property type="entry name" value="IF2"/>
    <property type="match status" value="1"/>
</dbReference>
<organism>
    <name type="scientific">Methylocella silvestris (strain DSM 15510 / CIP 108128 / LMG 27833 / NCIMB 13906 / BL2)</name>
    <dbReference type="NCBI Taxonomy" id="395965"/>
    <lineage>
        <taxon>Bacteria</taxon>
        <taxon>Pseudomonadati</taxon>
        <taxon>Pseudomonadota</taxon>
        <taxon>Alphaproteobacteria</taxon>
        <taxon>Hyphomicrobiales</taxon>
        <taxon>Beijerinckiaceae</taxon>
        <taxon>Methylocella</taxon>
    </lineage>
</organism>
<feature type="chain" id="PRO_1000118767" description="Translation initiation factor IF-2">
    <location>
        <begin position="1"/>
        <end position="886"/>
    </location>
</feature>
<feature type="domain" description="tr-type G">
    <location>
        <begin position="383"/>
        <end position="553"/>
    </location>
</feature>
<feature type="region of interest" description="Disordered" evidence="3">
    <location>
        <begin position="1"/>
        <end position="25"/>
    </location>
</feature>
<feature type="region of interest" description="Disordered" evidence="3">
    <location>
        <begin position="50"/>
        <end position="229"/>
    </location>
</feature>
<feature type="region of interest" description="Disordered" evidence="3">
    <location>
        <begin position="253"/>
        <end position="272"/>
    </location>
</feature>
<feature type="region of interest" description="G1" evidence="1">
    <location>
        <begin position="392"/>
        <end position="399"/>
    </location>
</feature>
<feature type="region of interest" description="G2" evidence="1">
    <location>
        <begin position="417"/>
        <end position="421"/>
    </location>
</feature>
<feature type="region of interest" description="G3" evidence="1">
    <location>
        <begin position="439"/>
        <end position="442"/>
    </location>
</feature>
<feature type="region of interest" description="G4" evidence="1">
    <location>
        <begin position="493"/>
        <end position="496"/>
    </location>
</feature>
<feature type="region of interest" description="G5" evidence="1">
    <location>
        <begin position="529"/>
        <end position="531"/>
    </location>
</feature>
<feature type="compositionally biased region" description="Basic and acidic residues" evidence="3">
    <location>
        <begin position="50"/>
        <end position="60"/>
    </location>
</feature>
<feature type="compositionally biased region" description="Low complexity" evidence="3">
    <location>
        <begin position="63"/>
        <end position="73"/>
    </location>
</feature>
<feature type="compositionally biased region" description="Pro residues" evidence="3">
    <location>
        <begin position="74"/>
        <end position="83"/>
    </location>
</feature>
<feature type="compositionally biased region" description="Low complexity" evidence="3">
    <location>
        <begin position="84"/>
        <end position="106"/>
    </location>
</feature>
<feature type="compositionally biased region" description="Basic and acidic residues" evidence="3">
    <location>
        <begin position="107"/>
        <end position="181"/>
    </location>
</feature>
<feature type="compositionally biased region" description="Low complexity" evidence="3">
    <location>
        <begin position="185"/>
        <end position="225"/>
    </location>
</feature>
<feature type="binding site" evidence="2">
    <location>
        <begin position="392"/>
        <end position="399"/>
    </location>
    <ligand>
        <name>GTP</name>
        <dbReference type="ChEBI" id="CHEBI:37565"/>
    </ligand>
</feature>
<feature type="binding site" evidence="2">
    <location>
        <begin position="439"/>
        <end position="443"/>
    </location>
    <ligand>
        <name>GTP</name>
        <dbReference type="ChEBI" id="CHEBI:37565"/>
    </ligand>
</feature>
<feature type="binding site" evidence="2">
    <location>
        <begin position="493"/>
        <end position="496"/>
    </location>
    <ligand>
        <name>GTP</name>
        <dbReference type="ChEBI" id="CHEBI:37565"/>
    </ligand>
</feature>
<comment type="function">
    <text evidence="2">One of the essential components for the initiation of protein synthesis. Protects formylmethionyl-tRNA from spontaneous hydrolysis and promotes its binding to the 30S ribosomal subunits. Also involved in the hydrolysis of GTP during the formation of the 70S ribosomal complex.</text>
</comment>
<comment type="subcellular location">
    <subcellularLocation>
        <location evidence="2">Cytoplasm</location>
    </subcellularLocation>
</comment>
<comment type="similarity">
    <text evidence="2">Belongs to the TRAFAC class translation factor GTPase superfamily. Classic translation factor GTPase family. IF-2 subfamily.</text>
</comment>